<organism>
    <name type="scientific">Streptococcus pyogenes serotype M18 (strain MGAS8232)</name>
    <dbReference type="NCBI Taxonomy" id="186103"/>
    <lineage>
        <taxon>Bacteria</taxon>
        <taxon>Bacillati</taxon>
        <taxon>Bacillota</taxon>
        <taxon>Bacilli</taxon>
        <taxon>Lactobacillales</taxon>
        <taxon>Streptococcaceae</taxon>
        <taxon>Streptococcus</taxon>
    </lineage>
</organism>
<dbReference type="EC" id="5.6.2.2" evidence="1"/>
<dbReference type="EMBL" id="AE009949">
    <property type="protein sequence ID" value="AAL97459.1"/>
    <property type="molecule type" value="Genomic_DNA"/>
</dbReference>
<dbReference type="RefSeq" id="WP_011017600.1">
    <property type="nucleotide sequence ID" value="NC_003485.1"/>
</dbReference>
<dbReference type="SMR" id="Q8P1M4"/>
<dbReference type="KEGG" id="spm:spyM18_0795"/>
<dbReference type="HOGENOM" id="CLU_006146_4_1_9"/>
<dbReference type="GO" id="GO:0005694">
    <property type="term" value="C:chromosome"/>
    <property type="evidence" value="ECO:0007669"/>
    <property type="project" value="InterPro"/>
</dbReference>
<dbReference type="GO" id="GO:0005737">
    <property type="term" value="C:cytoplasm"/>
    <property type="evidence" value="ECO:0007669"/>
    <property type="project" value="UniProtKB-SubCell"/>
</dbReference>
<dbReference type="GO" id="GO:0005524">
    <property type="term" value="F:ATP binding"/>
    <property type="evidence" value="ECO:0007669"/>
    <property type="project" value="UniProtKB-UniRule"/>
</dbReference>
<dbReference type="GO" id="GO:0003677">
    <property type="term" value="F:DNA binding"/>
    <property type="evidence" value="ECO:0007669"/>
    <property type="project" value="UniProtKB-KW"/>
</dbReference>
<dbReference type="GO" id="GO:0034335">
    <property type="term" value="F:DNA negative supercoiling activity"/>
    <property type="evidence" value="ECO:0007669"/>
    <property type="project" value="UniProtKB-ARBA"/>
</dbReference>
<dbReference type="GO" id="GO:0046872">
    <property type="term" value="F:metal ion binding"/>
    <property type="evidence" value="ECO:0007669"/>
    <property type="project" value="UniProtKB-KW"/>
</dbReference>
<dbReference type="GO" id="GO:0006265">
    <property type="term" value="P:DNA topological change"/>
    <property type="evidence" value="ECO:0007669"/>
    <property type="project" value="UniProtKB-UniRule"/>
</dbReference>
<dbReference type="GO" id="GO:0006261">
    <property type="term" value="P:DNA-templated DNA replication"/>
    <property type="evidence" value="ECO:0007669"/>
    <property type="project" value="UniProtKB-UniRule"/>
</dbReference>
<dbReference type="CDD" id="cd16928">
    <property type="entry name" value="HATPase_GyrB-like"/>
    <property type="match status" value="1"/>
</dbReference>
<dbReference type="CDD" id="cd00822">
    <property type="entry name" value="TopoII_Trans_DNA_gyrase"/>
    <property type="match status" value="1"/>
</dbReference>
<dbReference type="CDD" id="cd03366">
    <property type="entry name" value="TOPRIM_TopoIIA_GyrB"/>
    <property type="match status" value="1"/>
</dbReference>
<dbReference type="FunFam" id="3.30.230.10:FF:000005">
    <property type="entry name" value="DNA gyrase subunit B"/>
    <property type="match status" value="1"/>
</dbReference>
<dbReference type="FunFam" id="3.30.565.10:FF:000002">
    <property type="entry name" value="DNA gyrase subunit B"/>
    <property type="match status" value="1"/>
</dbReference>
<dbReference type="FunFam" id="3.40.50.670:FF:000002">
    <property type="entry name" value="DNA gyrase subunit B"/>
    <property type="match status" value="1"/>
</dbReference>
<dbReference type="Gene3D" id="3.30.230.10">
    <property type="match status" value="1"/>
</dbReference>
<dbReference type="Gene3D" id="3.40.50.670">
    <property type="match status" value="1"/>
</dbReference>
<dbReference type="Gene3D" id="3.30.565.10">
    <property type="entry name" value="Histidine kinase-like ATPase, C-terminal domain"/>
    <property type="match status" value="1"/>
</dbReference>
<dbReference type="HAMAP" id="MF_01898">
    <property type="entry name" value="GyrB"/>
    <property type="match status" value="1"/>
</dbReference>
<dbReference type="InterPro" id="IPR002288">
    <property type="entry name" value="DNA_gyrase_B_C"/>
</dbReference>
<dbReference type="InterPro" id="IPR011557">
    <property type="entry name" value="GyrB"/>
</dbReference>
<dbReference type="InterPro" id="IPR036890">
    <property type="entry name" value="HATPase_C_sf"/>
</dbReference>
<dbReference type="InterPro" id="IPR020568">
    <property type="entry name" value="Ribosomal_Su5_D2-typ_SF"/>
</dbReference>
<dbReference type="InterPro" id="IPR014721">
    <property type="entry name" value="Ribsml_uS5_D2-typ_fold_subgr"/>
</dbReference>
<dbReference type="InterPro" id="IPR001241">
    <property type="entry name" value="Topo_IIA"/>
</dbReference>
<dbReference type="InterPro" id="IPR013760">
    <property type="entry name" value="Topo_IIA-like_dom_sf"/>
</dbReference>
<dbReference type="InterPro" id="IPR000565">
    <property type="entry name" value="Topo_IIA_B"/>
</dbReference>
<dbReference type="InterPro" id="IPR013759">
    <property type="entry name" value="Topo_IIA_B_C"/>
</dbReference>
<dbReference type="InterPro" id="IPR013506">
    <property type="entry name" value="Topo_IIA_bsu_dom2"/>
</dbReference>
<dbReference type="InterPro" id="IPR018522">
    <property type="entry name" value="TopoIIA_CS"/>
</dbReference>
<dbReference type="InterPro" id="IPR006171">
    <property type="entry name" value="TOPRIM_dom"/>
</dbReference>
<dbReference type="InterPro" id="IPR034160">
    <property type="entry name" value="TOPRIM_GyrB"/>
</dbReference>
<dbReference type="NCBIfam" id="TIGR01059">
    <property type="entry name" value="gyrB"/>
    <property type="match status" value="1"/>
</dbReference>
<dbReference type="NCBIfam" id="NF004189">
    <property type="entry name" value="PRK05644.1"/>
    <property type="match status" value="1"/>
</dbReference>
<dbReference type="NCBIfam" id="NF011501">
    <property type="entry name" value="PRK14939.1"/>
    <property type="match status" value="1"/>
</dbReference>
<dbReference type="PANTHER" id="PTHR45866:SF1">
    <property type="entry name" value="DNA GYRASE SUBUNIT B, MITOCHONDRIAL"/>
    <property type="match status" value="1"/>
</dbReference>
<dbReference type="PANTHER" id="PTHR45866">
    <property type="entry name" value="DNA GYRASE/TOPOISOMERASE SUBUNIT B"/>
    <property type="match status" value="1"/>
</dbReference>
<dbReference type="Pfam" id="PF00204">
    <property type="entry name" value="DNA_gyraseB"/>
    <property type="match status" value="1"/>
</dbReference>
<dbReference type="Pfam" id="PF00986">
    <property type="entry name" value="DNA_gyraseB_C"/>
    <property type="match status" value="1"/>
</dbReference>
<dbReference type="Pfam" id="PF02518">
    <property type="entry name" value="HATPase_c"/>
    <property type="match status" value="1"/>
</dbReference>
<dbReference type="Pfam" id="PF01751">
    <property type="entry name" value="Toprim"/>
    <property type="match status" value="1"/>
</dbReference>
<dbReference type="PRINTS" id="PR01159">
    <property type="entry name" value="DNAGYRASEB"/>
</dbReference>
<dbReference type="PRINTS" id="PR00418">
    <property type="entry name" value="TPI2FAMILY"/>
</dbReference>
<dbReference type="SMART" id="SM00387">
    <property type="entry name" value="HATPase_c"/>
    <property type="match status" value="1"/>
</dbReference>
<dbReference type="SMART" id="SM00433">
    <property type="entry name" value="TOP2c"/>
    <property type="match status" value="1"/>
</dbReference>
<dbReference type="SUPFAM" id="SSF55874">
    <property type="entry name" value="ATPase domain of HSP90 chaperone/DNA topoisomerase II/histidine kinase"/>
    <property type="match status" value="1"/>
</dbReference>
<dbReference type="SUPFAM" id="SSF54211">
    <property type="entry name" value="Ribosomal protein S5 domain 2-like"/>
    <property type="match status" value="1"/>
</dbReference>
<dbReference type="SUPFAM" id="SSF56719">
    <property type="entry name" value="Type II DNA topoisomerase"/>
    <property type="match status" value="1"/>
</dbReference>
<dbReference type="PROSITE" id="PS00177">
    <property type="entry name" value="TOPOISOMERASE_II"/>
    <property type="match status" value="1"/>
</dbReference>
<dbReference type="PROSITE" id="PS50880">
    <property type="entry name" value="TOPRIM"/>
    <property type="match status" value="1"/>
</dbReference>
<feature type="chain" id="PRO_0000145352" description="DNA gyrase subunit B">
    <location>
        <begin position="1"/>
        <end position="650"/>
    </location>
</feature>
<feature type="domain" description="Toprim" evidence="1">
    <location>
        <begin position="429"/>
        <end position="543"/>
    </location>
</feature>
<feature type="binding site" evidence="1">
    <location>
        <position position="435"/>
    </location>
    <ligand>
        <name>Mg(2+)</name>
        <dbReference type="ChEBI" id="CHEBI:18420"/>
        <label>1</label>
        <note>catalytic</note>
    </ligand>
</feature>
<feature type="binding site" evidence="1">
    <location>
        <position position="508"/>
    </location>
    <ligand>
        <name>Mg(2+)</name>
        <dbReference type="ChEBI" id="CHEBI:18420"/>
        <label>1</label>
        <note>catalytic</note>
    </ligand>
</feature>
<feature type="binding site" evidence="1">
    <location>
        <position position="508"/>
    </location>
    <ligand>
        <name>Mg(2+)</name>
        <dbReference type="ChEBI" id="CHEBI:18420"/>
        <label>2</label>
    </ligand>
</feature>
<feature type="binding site" evidence="1">
    <location>
        <position position="510"/>
    </location>
    <ligand>
        <name>Mg(2+)</name>
        <dbReference type="ChEBI" id="CHEBI:18420"/>
        <label>2</label>
    </ligand>
</feature>
<feature type="site" description="Interaction with DNA" evidence="1">
    <location>
        <position position="460"/>
    </location>
</feature>
<feature type="site" description="Interaction with DNA" evidence="1">
    <location>
        <position position="463"/>
    </location>
</feature>
<proteinExistence type="inferred from homology"/>
<evidence type="ECO:0000255" key="1">
    <source>
        <dbReference type="HAMAP-Rule" id="MF_01898"/>
    </source>
</evidence>
<protein>
    <recommendedName>
        <fullName evidence="1">DNA gyrase subunit B</fullName>
        <ecNumber evidence="1">5.6.2.2</ecNumber>
    </recommendedName>
</protein>
<keyword id="KW-0067">ATP-binding</keyword>
<keyword id="KW-0963">Cytoplasm</keyword>
<keyword id="KW-0238">DNA-binding</keyword>
<keyword id="KW-0413">Isomerase</keyword>
<keyword id="KW-0460">Magnesium</keyword>
<keyword id="KW-0479">Metal-binding</keyword>
<keyword id="KW-0547">Nucleotide-binding</keyword>
<keyword id="KW-0799">Topoisomerase</keyword>
<comment type="function">
    <text evidence="1">A type II topoisomerase that negatively supercoils closed circular double-stranded (ds) DNA in an ATP-dependent manner to modulate DNA topology and maintain chromosomes in an underwound state. Negative supercoiling favors strand separation, and DNA replication, transcription, recombination and repair, all of which involve strand separation. Also able to catalyze the interconversion of other topological isomers of dsDNA rings, including catenanes and knotted rings. Type II topoisomerases break and join 2 DNA strands simultaneously in an ATP-dependent manner.</text>
</comment>
<comment type="catalytic activity">
    <reaction evidence="1">
        <text>ATP-dependent breakage, passage and rejoining of double-stranded DNA.</text>
        <dbReference type="EC" id="5.6.2.2"/>
    </reaction>
</comment>
<comment type="cofactor">
    <cofactor evidence="1">
        <name>Mg(2+)</name>
        <dbReference type="ChEBI" id="CHEBI:18420"/>
    </cofactor>
    <cofactor evidence="1">
        <name>Mn(2+)</name>
        <dbReference type="ChEBI" id="CHEBI:29035"/>
    </cofactor>
    <cofactor evidence="1">
        <name>Ca(2+)</name>
        <dbReference type="ChEBI" id="CHEBI:29108"/>
    </cofactor>
    <text evidence="1">Binds two Mg(2+) per subunit. The magnesium ions form salt bridges with both the protein and the DNA. Can also accept other divalent metal cations, such as Mn(2+) or Ca(2+).</text>
</comment>
<comment type="subunit">
    <text evidence="1">Heterotetramer, composed of two GyrA and two GyrB chains. In the heterotetramer, GyrA contains the active site tyrosine that forms a transient covalent intermediate with DNA, while GyrB binds cofactors and catalyzes ATP hydrolysis.</text>
</comment>
<comment type="subcellular location">
    <subcellularLocation>
        <location evidence="1">Cytoplasm</location>
    </subcellularLocation>
</comment>
<comment type="miscellaneous">
    <text evidence="1">Few gyrases are as efficient as E.coli at forming negative supercoils. Not all organisms have 2 type II topoisomerases; in organisms with a single type II topoisomerase this enzyme also has to decatenate newly replicated chromosomes.</text>
</comment>
<comment type="similarity">
    <text evidence="1">Belongs to the type II topoisomerase GyrB family.</text>
</comment>
<reference key="1">
    <citation type="journal article" date="2002" name="Proc. Natl. Acad. Sci. U.S.A.">
        <title>Genome sequence and comparative microarray analysis of serotype M18 group A Streptococcus strains associated with acute rheumatic fever outbreaks.</title>
        <authorList>
            <person name="Smoot J.C."/>
            <person name="Barbian K.D."/>
            <person name="Van Gompel J.J."/>
            <person name="Smoot L.M."/>
            <person name="Chaussee M.S."/>
            <person name="Sylva G.L."/>
            <person name="Sturdevant D.E."/>
            <person name="Ricklefs S.M."/>
            <person name="Porcella S.F."/>
            <person name="Parkins L.D."/>
            <person name="Beres S.B."/>
            <person name="Campbell D.S."/>
            <person name="Smith T.M."/>
            <person name="Zhang Q."/>
            <person name="Kapur V."/>
            <person name="Daly J.A."/>
            <person name="Veasy L.G."/>
            <person name="Musser J.M."/>
        </authorList>
    </citation>
    <scope>NUCLEOTIDE SEQUENCE [LARGE SCALE GENOMIC DNA]</scope>
    <source>
        <strain>MGAS8232</strain>
    </source>
</reference>
<gene>
    <name evidence="1" type="primary">gyrB</name>
    <name type="ordered locus">spyM18_0795</name>
</gene>
<accession>Q8P1M4</accession>
<name>GYRB_STRP8</name>
<sequence length="650" mass="72309">MIEENKHFEKKMQEYDASQIQVLEGLEAVRMRPGMYIGSTAKEGLHHLVWEIVDNSIDEALAGFASHIKVFIEADNSITVVDDGRGIPVDIQAKTGRPAVETVFTVLHAGGKFGGGGYKVSGGLHGVGSSVVNALSTQLDVRVYKNGQIHYQEFKRGAVVADLEIIGTTDVTGTTVHFTPDPEIFTETTQFDYSVLAKRIQELAFLNRGLKISITDKRSGMEQEEHFHYEGGIGSYVEFLNDKKDVIFETPIYTDGELEGIAVEVAMQYTTSYQETVMSFANNIHTHEGGTHEQGFRAALTRVINDYAKKNKILKENEDNLTGEDVREGLTAVISVKHPNPQFEGQTKTKLGNSEVVKITNRLFSEAFQRFLLENPQVARKIVEKGILASKARIAAKRAREVTRKKSGLEISNLPGKLADCSSNDANQNELFIVEGDSAGGSAKSGRNREFQAILPIRGKILNVEKATMDKILANEEIRSLFTAMGTGFGADFDVSKARYQKLVIMTDADVDGAHIRTLLLTLIYRFMRPVLEAGYVYIAQPPIYGVKVGSEIKEYIQPGIDQEDQLKTALEKYSIGRSKPTVQRYKGLGEMDDHQLWETTMDPENRLMARVTVDDAAEADKVFDMLMGDRVEPRRDFIEENAVYSTLDI</sequence>